<proteinExistence type="predicted"/>
<name>REGA_CLOSA</name>
<dbReference type="EMBL" id="L14685">
    <property type="protein sequence ID" value="AAA23275.1"/>
    <property type="molecule type" value="Genomic_DNA"/>
</dbReference>
<dbReference type="RefSeq" id="WP_022743435.1">
    <property type="nucleotide sequence ID" value="NZ_LZZA01000063.1"/>
</dbReference>
<dbReference type="SMR" id="Q45831"/>
<dbReference type="STRING" id="169679.CSACC_00620"/>
<dbReference type="GO" id="GO:0003700">
    <property type="term" value="F:DNA-binding transcription factor activity"/>
    <property type="evidence" value="ECO:0007669"/>
    <property type="project" value="TreeGrafter"/>
</dbReference>
<dbReference type="GO" id="GO:0000976">
    <property type="term" value="F:transcription cis-regulatory region binding"/>
    <property type="evidence" value="ECO:0007669"/>
    <property type="project" value="TreeGrafter"/>
</dbReference>
<dbReference type="CDD" id="cd01392">
    <property type="entry name" value="HTH_LacI"/>
    <property type="match status" value="1"/>
</dbReference>
<dbReference type="CDD" id="cd19975">
    <property type="entry name" value="PBP1_CcpA-like"/>
    <property type="match status" value="1"/>
</dbReference>
<dbReference type="FunFam" id="1.10.260.40:FF:000002">
    <property type="entry name" value="HTH-type transcriptional repressor PurR"/>
    <property type="match status" value="1"/>
</dbReference>
<dbReference type="Gene3D" id="3.40.50.2300">
    <property type="match status" value="2"/>
</dbReference>
<dbReference type="Gene3D" id="1.10.260.40">
    <property type="entry name" value="lambda repressor-like DNA-binding domains"/>
    <property type="match status" value="1"/>
</dbReference>
<dbReference type="InterPro" id="IPR000843">
    <property type="entry name" value="HTH_LacI"/>
</dbReference>
<dbReference type="InterPro" id="IPR046335">
    <property type="entry name" value="LacI/GalR-like_sensor"/>
</dbReference>
<dbReference type="InterPro" id="IPR010982">
    <property type="entry name" value="Lambda_DNA-bd_dom_sf"/>
</dbReference>
<dbReference type="InterPro" id="IPR028082">
    <property type="entry name" value="Peripla_BP_I"/>
</dbReference>
<dbReference type="PANTHER" id="PTHR30146:SF149">
    <property type="entry name" value="HTH-TYPE TRANSCRIPTIONAL REGULATOR EBGR"/>
    <property type="match status" value="1"/>
</dbReference>
<dbReference type="PANTHER" id="PTHR30146">
    <property type="entry name" value="LACI-RELATED TRANSCRIPTIONAL REPRESSOR"/>
    <property type="match status" value="1"/>
</dbReference>
<dbReference type="Pfam" id="PF00356">
    <property type="entry name" value="LacI"/>
    <property type="match status" value="1"/>
</dbReference>
<dbReference type="Pfam" id="PF13377">
    <property type="entry name" value="Peripla_BP_3"/>
    <property type="match status" value="1"/>
</dbReference>
<dbReference type="PRINTS" id="PR00036">
    <property type="entry name" value="HTHLACI"/>
</dbReference>
<dbReference type="SMART" id="SM00354">
    <property type="entry name" value="HTH_LACI"/>
    <property type="match status" value="1"/>
</dbReference>
<dbReference type="SUPFAM" id="SSF47413">
    <property type="entry name" value="lambda repressor-like DNA-binding domains"/>
    <property type="match status" value="1"/>
</dbReference>
<dbReference type="SUPFAM" id="SSF53822">
    <property type="entry name" value="Periplasmic binding protein-like I"/>
    <property type="match status" value="1"/>
</dbReference>
<dbReference type="PROSITE" id="PS00356">
    <property type="entry name" value="HTH_LACI_1"/>
    <property type="match status" value="1"/>
</dbReference>
<dbReference type="PROSITE" id="PS50932">
    <property type="entry name" value="HTH_LACI_2"/>
    <property type="match status" value="1"/>
</dbReference>
<evidence type="ECO:0000255" key="1">
    <source>
        <dbReference type="PROSITE-ProRule" id="PRU00111"/>
    </source>
</evidence>
<evidence type="ECO:0000305" key="2"/>
<comment type="function">
    <text>Involved in the regulation of amylase production.</text>
</comment>
<comment type="caution">
    <text evidence="2">Was originally thought to originate from C.acetobutylicum.</text>
</comment>
<feature type="chain" id="PRO_0000107994" description="HTH-type transcriptional regulator RegA">
    <location>
        <begin position="1"/>
        <end position="332"/>
    </location>
</feature>
<feature type="domain" description="HTH lacI-type" evidence="1">
    <location>
        <begin position="1"/>
        <end position="57"/>
    </location>
</feature>
<feature type="DNA-binding region" description="H-T-H motif" evidence="1">
    <location>
        <begin position="5"/>
        <end position="24"/>
    </location>
</feature>
<reference key="1">
    <citation type="journal article" date="1995" name="Microbiology">
        <title>A Clostridium acetobutylicum regulator gene (regA) affecting amylase production in Bacillus subtilis.</title>
        <authorList>
            <person name="Davison S.P."/>
            <person name="Santangelo J.D."/>
            <person name="Reid S.J."/>
            <person name="Woods D.R."/>
        </authorList>
    </citation>
    <scope>NUCLEOTIDE SEQUENCE [GENOMIC DNA]</scope>
    <source>
        <strain>ATCC BAA-117 / DSM 13864 / NCP 262</strain>
    </source>
</reference>
<keyword id="KW-0238">DNA-binding</keyword>
<keyword id="KW-0804">Transcription</keyword>
<keyword id="KW-0805">Transcription regulation</keyword>
<protein>
    <recommendedName>
        <fullName>HTH-type transcriptional regulator RegA</fullName>
    </recommendedName>
</protein>
<sequence length="332" mass="37261">MATSIKDVAREAGVSIATVSRVLNDIDVVNEDTKKKVLDAIKELGYRPNIVARSLKTQRTKTIGILLPDISNQFYPEIVRGAEDVSNIYDYNIILCNSDLDIEKEKEYLRVLKEKMVDGVIYMSSSLRDEILELINELDLKTVLVETRDKDGVLPSVTIDNIKGSYDSTNLLIQKGIKDIAFIGTKKDNMNAWGDRYVGYEKAMNEAGIKIDPELLYLDSIKVKSGYEGIQHFLGLNKKFKGVVCASDDIAMGAINALRDNNMEVPKDVSVVGFNDNFAASIFYPKITTVSQPTYDMGSVAMRMLIKLLNKKELDEPNYVLEHELIERESTI</sequence>
<gene>
    <name type="primary">regA</name>
    <name type="synonym">repA</name>
</gene>
<organism>
    <name type="scientific">Clostridium saccharobutylicum</name>
    <dbReference type="NCBI Taxonomy" id="169679"/>
    <lineage>
        <taxon>Bacteria</taxon>
        <taxon>Bacillati</taxon>
        <taxon>Bacillota</taxon>
        <taxon>Clostridia</taxon>
        <taxon>Eubacteriales</taxon>
        <taxon>Clostridiaceae</taxon>
        <taxon>Clostridium</taxon>
    </lineage>
</organism>
<accession>Q45831</accession>